<sequence>MVATIDSIEMPALPTAVEAHPMKGGDDSHSYSQNSCYQKGVIDAAKAVIVEAVNEKLDLENNPIFDPIKPFRIADFGCSTGPNTFHAMQNIVESVETKYKSLQKTPEFHVFFNDHVNNDFNVLFRSLPPNREFFAAGVPGSFYTRVFPKNSIHFAHCSYALHWLSKVPKEIQDKNSLAYNKGRIHYTGTEKHVVKAYFGQFQRDFEGFLKARAQEIVVGGLMVIQIPGLPSGEVLFSRTGAGLLHFLLGTSLMELVNKGIINEESVDSFNLPQYHPSVEDLEMVIEMNDCFTIERVGTLPHPMKNLPFDVQRTSLQVRAIMECILTEHFGENILDPLFEIYTKNLQENFHVFDKEIRKDADLYLVLKRKGN</sequence>
<comment type="function">
    <text evidence="2 3 4">Component of the seco-iridoid and derivatives monoterpenoid indole alkaloids (MIAs, e.g. vinblastine and ajmalicine) biosynthesis pathway. Catalyzes the methylation of loganic acid (6S,7R) to produce loganin (PubMed:18326827, PubMed:24104568, PubMed:29399933). Weak activity with secologanic acid as substrate. Inactive on deoxyloganic, dehydrologanic, epiloganic and loganetic acid (PubMed:18326827).</text>
</comment>
<comment type="catalytic activity">
    <reaction evidence="2 3 4">
        <text>loganate + S-adenosyl-L-methionine = loganin + S-adenosyl-L-homocysteine</text>
        <dbReference type="Rhea" id="RHEA:12508"/>
        <dbReference type="ChEBI" id="CHEBI:15771"/>
        <dbReference type="ChEBI" id="CHEBI:18052"/>
        <dbReference type="ChEBI" id="CHEBI:57856"/>
        <dbReference type="ChEBI" id="CHEBI:59789"/>
        <dbReference type="EC" id="2.1.1.50"/>
    </reaction>
    <physiologicalReaction direction="left-to-right" evidence="2">
        <dbReference type="Rhea" id="RHEA:12509"/>
    </physiologicalReaction>
</comment>
<comment type="cofactor">
    <cofactor evidence="1">
        <name>Mg(2+)</name>
        <dbReference type="ChEBI" id="CHEBI:18420"/>
    </cofactor>
    <text evidence="1">Binds 1 Mg(2+) ion per subunit.</text>
</comment>
<comment type="activity regulation">
    <text evidence="2">Strongly repressed by loganin and slightly by S-adenosyl-L-homocysteine.</text>
</comment>
<comment type="biophysicochemical properties">
    <kinetics>
        <KM evidence="4">315 uM for loganic acid (at pH 7.5 and 30 degrees Celsius)</KM>
        <KM evidence="2">15 mM for loganic acid</KM>
        <KM evidence="2">742 uM for S-adenosyl-L-methionine</KM>
        <text evidence="4">kcat is 0.31 sec(-1) with loganic acid as substrate (at pH 7.5 and 30 degrees Celsius).</text>
    </kinetics>
    <phDependence>
        <text evidence="2">Optimum pH is 7.5.</text>
    </phDependence>
</comment>
<comment type="pathway">
    <text evidence="2 3">Alkaloid biosynthesis.</text>
</comment>
<comment type="subunit">
    <text evidence="1">Homodimer.</text>
</comment>
<comment type="tissue specificity">
    <text evidence="2 3">Expressed in leaves (especially in leaf epidermis), flowers, siliques and stems, and, at low levels, in hairy roots.</text>
</comment>
<comment type="disruption phenotype">
    <text evidence="3">Large increases in loganic acid accumulation.</text>
</comment>
<comment type="similarity">
    <text evidence="7">Belongs to the methyltransferase superfamily. Type-7 methyltransferase family.</text>
</comment>
<comment type="online information" name="ORCAE database">
    <link uri="https://orcae.psb.ugent.be/taxa/catro/regular/v1/"/>
</comment>
<feature type="chain" id="PRO_0000446406" description="Loganic acid O-methyltransferase">
    <location>
        <begin position="1"/>
        <end position="371"/>
    </location>
</feature>
<feature type="binding site" evidence="4 8 9">
    <location>
        <position position="31"/>
    </location>
    <ligand>
        <name>S-adenosyl-L-homocysteine</name>
        <dbReference type="ChEBI" id="CHEBI:57856"/>
    </ligand>
</feature>
<feature type="binding site" evidence="4 8">
    <location>
        <position position="37"/>
    </location>
    <ligand>
        <name>loganate</name>
        <dbReference type="ChEBI" id="CHEBI:18052"/>
    </ligand>
</feature>
<feature type="binding site" evidence="4 8">
    <location>
        <position position="38"/>
    </location>
    <ligand>
        <name>loganate</name>
        <dbReference type="ChEBI" id="CHEBI:18052"/>
    </ligand>
</feature>
<feature type="binding site" evidence="4 8 9">
    <location>
        <position position="78"/>
    </location>
    <ligand>
        <name>S-adenosyl-L-homocysteine</name>
        <dbReference type="ChEBI" id="CHEBI:57856"/>
    </ligand>
</feature>
<feature type="binding site" evidence="4 8 9">
    <location>
        <position position="83"/>
    </location>
    <ligand>
        <name>S-adenosyl-L-homocysteine</name>
        <dbReference type="ChEBI" id="CHEBI:57856"/>
    </ligand>
</feature>
<feature type="binding site" evidence="4 8 9">
    <location>
        <position position="114"/>
    </location>
    <ligand>
        <name>S-adenosyl-L-homocysteine</name>
        <dbReference type="ChEBI" id="CHEBI:57856"/>
    </ligand>
</feature>
<feature type="binding site" evidence="4 8 9">
    <location>
        <position position="115"/>
    </location>
    <ligand>
        <name>S-adenosyl-L-homocysteine</name>
        <dbReference type="ChEBI" id="CHEBI:57856"/>
    </ligand>
</feature>
<feature type="binding site" evidence="4 8 9">
    <location>
        <position position="141"/>
    </location>
    <ligand>
        <name>S-adenosyl-L-homocysteine</name>
        <dbReference type="ChEBI" id="CHEBI:57856"/>
    </ligand>
</feature>
<feature type="binding site" evidence="4 8 9">
    <location>
        <position position="142"/>
    </location>
    <ligand>
        <name>S-adenosyl-L-homocysteine</name>
        <dbReference type="ChEBI" id="CHEBI:57856"/>
    </ligand>
</feature>
<feature type="binding site" evidence="4 8">
    <location>
        <position position="162"/>
    </location>
    <ligand>
        <name>loganate</name>
        <dbReference type="ChEBI" id="CHEBI:18052"/>
    </ligand>
</feature>
<feature type="binding site" evidence="4 8">
    <location>
        <position position="163"/>
    </location>
    <ligand>
        <name>loganate</name>
        <dbReference type="ChEBI" id="CHEBI:18052"/>
    </ligand>
</feature>
<feature type="binding site" evidence="1">
    <location>
        <position position="180"/>
    </location>
    <ligand>
        <name>Mg(2+)</name>
        <dbReference type="ChEBI" id="CHEBI:18420"/>
    </ligand>
</feature>
<feature type="binding site" evidence="4 8">
    <location>
        <position position="241"/>
    </location>
    <ligand>
        <name>loganate</name>
        <dbReference type="ChEBI" id="CHEBI:18052"/>
    </ligand>
</feature>
<feature type="binding site" evidence="4 8">
    <location>
        <position position="245"/>
    </location>
    <ligand>
        <name>loganate</name>
        <dbReference type="ChEBI" id="CHEBI:18052"/>
    </ligand>
</feature>
<feature type="binding site" evidence="1">
    <location>
        <position position="267"/>
    </location>
    <ligand>
        <name>Mg(2+)</name>
        <dbReference type="ChEBI" id="CHEBI:18420"/>
    </ligand>
</feature>
<feature type="binding site" evidence="1">
    <location>
        <position position="269"/>
    </location>
    <ligand>
        <name>Mg(2+)</name>
        <dbReference type="ChEBI" id="CHEBI:18420"/>
    </ligand>
</feature>
<feature type="binding site" evidence="1">
    <location>
        <position position="270"/>
    </location>
    <ligand>
        <name>Mg(2+)</name>
        <dbReference type="ChEBI" id="CHEBI:18420"/>
    </ligand>
</feature>
<feature type="binding site" evidence="4 8">
    <location>
        <position position="273"/>
    </location>
    <ligand>
        <name>loganate</name>
        <dbReference type="ChEBI" id="CHEBI:18052"/>
    </ligand>
</feature>
<feature type="binding site" evidence="4 8">
    <location>
        <position position="316"/>
    </location>
    <ligand>
        <name>loganate</name>
        <dbReference type="ChEBI" id="CHEBI:18052"/>
    </ligand>
</feature>
<feature type="mutagenesis site" description="Strongly reduced activity." evidence="4">
    <original>Y</original>
    <variation>F</variation>
    <location>
        <position position="31"/>
    </location>
</feature>
<feature type="mutagenesis site" description="Abolished activity." evidence="4">
    <original>Y</original>
    <variation>A</variation>
    <location>
        <position position="37"/>
    </location>
</feature>
<feature type="mutagenesis site" description="Strongly reduced activity." evidence="4">
    <original>Q</original>
    <variation>A</variation>
    <location>
        <position position="38"/>
    </location>
</feature>
<feature type="mutagenesis site" description="Abolished activity." evidence="4">
    <original>Y</original>
    <variation>A</variation>
    <location>
        <position position="159"/>
    </location>
</feature>
<feature type="mutagenesis site" description="Abolished activity." evidence="4">
    <original>H</original>
    <variation>A</variation>
    <location>
        <position position="162"/>
    </location>
</feature>
<feature type="mutagenesis site" description="Strongly reduced activity." evidence="4">
    <original>W</original>
    <variation>F</variation>
    <location>
        <position position="163"/>
    </location>
</feature>
<feature type="mutagenesis site" description="Abolished activity." evidence="4">
    <original>H</original>
    <variation>A</variation>
    <location>
        <position position="245"/>
    </location>
</feature>
<feature type="mutagenesis site" description="Strongly reduced activity." evidence="4">
    <original>Q</original>
    <variation>A</variation>
    <location>
        <position position="273"/>
    </location>
</feature>
<feature type="mutagenesis site" description="Reduced activity." evidence="4">
    <original>Q</original>
    <variation>A</variation>
    <location>
        <position position="316"/>
    </location>
</feature>
<feature type="strand" evidence="10">
    <location>
        <begin position="25"/>
        <end position="27"/>
    </location>
</feature>
<feature type="helix" evidence="10">
    <location>
        <begin position="31"/>
        <end position="33"/>
    </location>
</feature>
<feature type="helix" evidence="10">
    <location>
        <begin position="36"/>
        <end position="56"/>
    </location>
</feature>
<feature type="helix" evidence="10">
    <location>
        <begin position="63"/>
        <end position="65"/>
    </location>
</feature>
<feature type="strand" evidence="10">
    <location>
        <begin position="71"/>
        <end position="77"/>
    </location>
</feature>
<feature type="helix" evidence="10">
    <location>
        <begin position="83"/>
        <end position="100"/>
    </location>
</feature>
<feature type="turn" evidence="10">
    <location>
        <begin position="101"/>
        <end position="103"/>
    </location>
</feature>
<feature type="strand" evidence="10">
    <location>
        <begin position="108"/>
        <end position="114"/>
    </location>
</feature>
<feature type="helix" evidence="10">
    <location>
        <begin position="120"/>
        <end position="125"/>
    </location>
</feature>
<feature type="strand" evidence="10">
    <location>
        <begin position="132"/>
        <end position="140"/>
    </location>
</feature>
<feature type="strand" evidence="10">
    <location>
        <begin position="152"/>
        <end position="159"/>
    </location>
</feature>
<feature type="helix" evidence="10">
    <location>
        <begin position="169"/>
        <end position="172"/>
    </location>
</feature>
<feature type="helix" evidence="10">
    <location>
        <begin position="191"/>
        <end position="215"/>
    </location>
</feature>
<feature type="strand" evidence="10">
    <location>
        <begin position="216"/>
        <end position="227"/>
    </location>
</feature>
<feature type="helix" evidence="10">
    <location>
        <begin position="236"/>
        <end position="238"/>
    </location>
</feature>
<feature type="helix" evidence="10">
    <location>
        <begin position="240"/>
        <end position="257"/>
    </location>
</feature>
<feature type="helix" evidence="10">
    <location>
        <begin position="263"/>
        <end position="267"/>
    </location>
</feature>
<feature type="helix" evidence="10">
    <location>
        <begin position="278"/>
        <end position="288"/>
    </location>
</feature>
<feature type="strand" evidence="10">
    <location>
        <begin position="290"/>
        <end position="298"/>
    </location>
</feature>
<feature type="turn" evidence="10">
    <location>
        <begin position="302"/>
        <end position="305"/>
    </location>
</feature>
<feature type="helix" evidence="10">
    <location>
        <begin position="310"/>
        <end position="329"/>
    </location>
</feature>
<feature type="helix" evidence="10">
    <location>
        <begin position="331"/>
        <end position="333"/>
    </location>
</feature>
<feature type="helix" evidence="10">
    <location>
        <begin position="334"/>
        <end position="347"/>
    </location>
</feature>
<feature type="helix" evidence="10">
    <location>
        <begin position="349"/>
        <end position="354"/>
    </location>
</feature>
<feature type="strand" evidence="10">
    <location>
        <begin position="356"/>
        <end position="358"/>
    </location>
</feature>
<feature type="strand" evidence="10">
    <location>
        <begin position="361"/>
        <end position="368"/>
    </location>
</feature>
<dbReference type="EC" id="2.1.1.50" evidence="2 3 4"/>
<dbReference type="EMBL" id="EU057974">
    <property type="protein sequence ID" value="ABW38009.1"/>
    <property type="molecule type" value="mRNA"/>
</dbReference>
<dbReference type="EMBL" id="KF415116">
    <property type="protein sequence ID" value="AGX93063.1"/>
    <property type="molecule type" value="mRNA"/>
</dbReference>
<dbReference type="PDB" id="6C8R">
    <property type="method" value="X-ray"/>
    <property type="resolution" value="1.95 A"/>
    <property type="chains" value="A/B=1-371"/>
</dbReference>
<dbReference type="PDB" id="6C8S">
    <property type="method" value="X-ray"/>
    <property type="resolution" value="2.20 A"/>
    <property type="chains" value="A/B=1-371"/>
</dbReference>
<dbReference type="PDBsum" id="6C8R"/>
<dbReference type="PDBsum" id="6C8S"/>
<dbReference type="SMR" id="B2KPR3"/>
<dbReference type="MINT" id="B2KPR3"/>
<dbReference type="KEGG" id="ag:ABW38009"/>
<dbReference type="OrthoDB" id="1523883at2759"/>
<dbReference type="BioCyc" id="MetaCyc:MONOMER-13907"/>
<dbReference type="BRENDA" id="2.1.1.50">
    <property type="organism ID" value="1211"/>
</dbReference>
<dbReference type="SABIO-RK" id="B2KPR3"/>
<dbReference type="GO" id="GO:0030749">
    <property type="term" value="F:loganate O-methyltransferase activity"/>
    <property type="evidence" value="ECO:0000314"/>
    <property type="project" value="UniProtKB"/>
</dbReference>
<dbReference type="GO" id="GO:0046872">
    <property type="term" value="F:metal ion binding"/>
    <property type="evidence" value="ECO:0007669"/>
    <property type="project" value="UniProtKB-KW"/>
</dbReference>
<dbReference type="GO" id="GO:0035834">
    <property type="term" value="P:indole alkaloid metabolic process"/>
    <property type="evidence" value="ECO:0000314"/>
    <property type="project" value="UniProtKB"/>
</dbReference>
<dbReference type="GO" id="GO:0032259">
    <property type="term" value="P:methylation"/>
    <property type="evidence" value="ECO:0007669"/>
    <property type="project" value="UniProtKB-KW"/>
</dbReference>
<dbReference type="FunFam" id="3.40.50.150:FF:000103">
    <property type="entry name" value="SABATH methyltransferase 1"/>
    <property type="match status" value="1"/>
</dbReference>
<dbReference type="Gene3D" id="1.10.1200.270">
    <property type="entry name" value="Methyltransferase, alpha-helical capping domain"/>
    <property type="match status" value="1"/>
</dbReference>
<dbReference type="Gene3D" id="3.40.50.150">
    <property type="entry name" value="Vaccinia Virus protein VP39"/>
    <property type="match status" value="1"/>
</dbReference>
<dbReference type="InterPro" id="IPR005299">
    <property type="entry name" value="MeTrfase_7"/>
</dbReference>
<dbReference type="InterPro" id="IPR042086">
    <property type="entry name" value="MeTrfase_capping"/>
</dbReference>
<dbReference type="InterPro" id="IPR029063">
    <property type="entry name" value="SAM-dependent_MTases_sf"/>
</dbReference>
<dbReference type="PANTHER" id="PTHR31009">
    <property type="entry name" value="S-ADENOSYL-L-METHIONINE:CARBOXYL METHYLTRANSFERASE FAMILY PROTEIN"/>
    <property type="match status" value="1"/>
</dbReference>
<dbReference type="Pfam" id="PF03492">
    <property type="entry name" value="Methyltransf_7"/>
    <property type="match status" value="1"/>
</dbReference>
<dbReference type="SUPFAM" id="SSF53335">
    <property type="entry name" value="S-adenosyl-L-methionine-dependent methyltransferases"/>
    <property type="match status" value="1"/>
</dbReference>
<protein>
    <recommendedName>
        <fullName evidence="5 6">Loganic acid O-methyltransferase</fullName>
        <shortName evidence="5 6">CrLAMT</shortName>
        <ecNumber evidence="2 3 4">2.1.1.50</ecNumber>
    </recommendedName>
</protein>
<reference key="1">
    <citation type="journal article" date="2008" name="Plant Cell">
        <title>The leaf epidermome of Catharanthus roseus reveals its biochemical specialization.</title>
        <authorList>
            <person name="Murata J."/>
            <person name="Roepke J."/>
            <person name="Gordon H."/>
            <person name="De Luca V."/>
        </authorList>
    </citation>
    <scope>NUCLEOTIDE SEQUENCE [MRNA]</scope>
    <scope>FUNCTION</scope>
    <scope>CATALYTIC ACTIVITY</scope>
    <scope>TISSUE SPECIFICITY</scope>
    <scope>BIOPHYSICOCHEMICAL PROPERTIES</scope>
    <scope>ACTIVITY REGULATION</scope>
    <scope>PATHWAY</scope>
    <source>
        <strain>cv. Little Delicata</strain>
        <tissue>Leaf</tissue>
    </source>
</reference>
<reference key="2">
    <citation type="journal article" date="2013" name="Plant Cell">
        <title>A 7-deoxyloganetic Acid glucosyltransferase contributes a key step in secologanin biosynthesis in madagascar periwinkle.</title>
        <authorList>
            <person name="Asada K."/>
            <person name="Salim V."/>
            <person name="Masada-Atsumi S."/>
            <person name="Edmunds E."/>
            <person name="Nagatoshi M."/>
            <person name="Terasaka K."/>
            <person name="Mizukami H."/>
            <person name="De Luca V."/>
        </authorList>
    </citation>
    <scope>NUCLEOTIDE SEQUENCE [MRNA]</scope>
    <scope>FUNCTION</scope>
    <scope>DISRUPTION PHENOTYPE</scope>
    <scope>CATALYTIC ACTIVITY</scope>
    <scope>PATHWAY</scope>
    <scope>TISSUE SPECIFICITY</scope>
    <source>
        <strain>cv. Little Delicata</strain>
    </source>
</reference>
<reference key="3">
    <citation type="journal article" date="2018" name="ChemBioChem">
        <title>Loganic acid methyltransferase: Insights into the specificity of methylation on an iridoid glycoside.</title>
        <authorList>
            <person name="Petronikolou N."/>
            <person name="Hollatz A."/>
            <person name="Schuler M.A."/>
            <person name="Nair S.K."/>
        </authorList>
    </citation>
    <scope>X-RAY CRYSTALLOGRAPHY (1.95 ANGSTROMS) IN COMPLEX WITH S-ADENOSYL-L-HOMOCYSTEINE AND LOGANIC ACID</scope>
    <scope>FUNCTION</scope>
    <scope>CATALYTIC ACTIVITY</scope>
    <scope>MUTAGENESIS OF TYR-31; TYR-37; GLN-38; TYR-159; HIS-162; TRP-163; HIS-245; GLN-273 AND GLN-316</scope>
    <scope>BIOPHYSICOCHEMICAL PROPERTIES</scope>
</reference>
<keyword id="KW-0002">3D-structure</keyword>
<keyword id="KW-0460">Magnesium</keyword>
<keyword id="KW-0479">Metal-binding</keyword>
<keyword id="KW-0489">Methyltransferase</keyword>
<keyword id="KW-0949">S-adenosyl-L-methionine</keyword>
<keyword id="KW-0808">Transferase</keyword>
<accession>B2KPR3</accession>
<evidence type="ECO:0000250" key="1">
    <source>
        <dbReference type="UniProtKB" id="Q9FLN8"/>
    </source>
</evidence>
<evidence type="ECO:0000269" key="2">
    <source>
    </source>
</evidence>
<evidence type="ECO:0000269" key="3">
    <source>
    </source>
</evidence>
<evidence type="ECO:0000269" key="4">
    <source>
    </source>
</evidence>
<evidence type="ECO:0000303" key="5">
    <source>
    </source>
</evidence>
<evidence type="ECO:0000303" key="6">
    <source>
    </source>
</evidence>
<evidence type="ECO:0000305" key="7"/>
<evidence type="ECO:0007744" key="8">
    <source>
        <dbReference type="PDB" id="6C8R"/>
    </source>
</evidence>
<evidence type="ECO:0007744" key="9">
    <source>
        <dbReference type="PDB" id="6C8S"/>
    </source>
</evidence>
<evidence type="ECO:0007829" key="10">
    <source>
        <dbReference type="PDB" id="6C8R"/>
    </source>
</evidence>
<name>LAMT_CATRO</name>
<gene>
    <name evidence="5 6" type="primary">LAMT</name>
</gene>
<organism>
    <name type="scientific">Catharanthus roseus</name>
    <name type="common">Madagascar periwinkle</name>
    <name type="synonym">Vinca rosea</name>
    <dbReference type="NCBI Taxonomy" id="4058"/>
    <lineage>
        <taxon>Eukaryota</taxon>
        <taxon>Viridiplantae</taxon>
        <taxon>Streptophyta</taxon>
        <taxon>Embryophyta</taxon>
        <taxon>Tracheophyta</taxon>
        <taxon>Spermatophyta</taxon>
        <taxon>Magnoliopsida</taxon>
        <taxon>eudicotyledons</taxon>
        <taxon>Gunneridae</taxon>
        <taxon>Pentapetalae</taxon>
        <taxon>asterids</taxon>
        <taxon>lamiids</taxon>
        <taxon>Gentianales</taxon>
        <taxon>Apocynaceae</taxon>
        <taxon>Rauvolfioideae</taxon>
        <taxon>Vinceae</taxon>
        <taxon>Catharanthinae</taxon>
        <taxon>Catharanthus</taxon>
    </lineage>
</organism>
<proteinExistence type="evidence at protein level"/>